<sequence length="308" mass="34857">MICMHFSVLLQESIADLNINPEGIYIDATFGRGGHSKAILDKLTSGRLIAFDKDLDAIDYATHNFQNDNFEMVHASFTYIYDYCLQHNLLGRVDGIIMDLGVSSPQLDNANRGFSFTHDGPLDMRMDISKGLTASQALEELSVDELTYIFKVYGEERFAKKIALRIKGYIAENGSITTTHQLAELIRATIGKREKKNPATRCFQALRIYVNDELKDLEILLESILDVIKKGGRVAAISFHSLEDRIVKQKFTSLINPKQETNRIAKMLPQDNSQVKMKWITKKAKANQDELSQNVRSRSAILRVVEKL</sequence>
<protein>
    <recommendedName>
        <fullName evidence="1">Ribosomal RNA small subunit methyltransferase H</fullName>
        <ecNumber evidence="1">2.1.1.199</ecNumber>
    </recommendedName>
    <alternativeName>
        <fullName evidence="1">16S rRNA m(4)C1402 methyltransferase</fullName>
    </alternativeName>
    <alternativeName>
        <fullName evidence="1">rRNA (cytosine-N(4)-)-methyltransferase RsmH</fullName>
    </alternativeName>
</protein>
<proteinExistence type="inferred from homology"/>
<reference key="1">
    <citation type="submission" date="2007-12" db="EMBL/GenBank/DDBJ databases">
        <title>Complete sequence of chromosome of Francisella philomiragia subsp. philomiragia ATCC 25017.</title>
        <authorList>
            <consortium name="US DOE Joint Genome Institute"/>
            <person name="Copeland A."/>
            <person name="Lucas S."/>
            <person name="Lapidus A."/>
            <person name="Barry K."/>
            <person name="Detter J.C."/>
            <person name="Glavina del Rio T."/>
            <person name="Hammon N."/>
            <person name="Israni S."/>
            <person name="Dalin E."/>
            <person name="Tice H."/>
            <person name="Pitluck S."/>
            <person name="Chain P."/>
            <person name="Malfatti S."/>
            <person name="Shin M."/>
            <person name="Vergez L."/>
            <person name="Schmutz J."/>
            <person name="Larimer F."/>
            <person name="Land M."/>
            <person name="Hauser L."/>
            <person name="Richardson P."/>
        </authorList>
    </citation>
    <scope>NUCLEOTIDE SEQUENCE [LARGE SCALE GENOMIC DNA]</scope>
    <source>
        <strain>ATCC 25017 / CCUG 19701 / FSC 153 / O#319-036</strain>
    </source>
</reference>
<name>RSMH_FRAP2</name>
<evidence type="ECO:0000255" key="1">
    <source>
        <dbReference type="HAMAP-Rule" id="MF_01007"/>
    </source>
</evidence>
<accession>B0TZ13</accession>
<comment type="function">
    <text evidence="1">Specifically methylates the N4 position of cytidine in position 1402 (C1402) of 16S rRNA.</text>
</comment>
<comment type="catalytic activity">
    <reaction evidence="1">
        <text>cytidine(1402) in 16S rRNA + S-adenosyl-L-methionine = N(4)-methylcytidine(1402) in 16S rRNA + S-adenosyl-L-homocysteine + H(+)</text>
        <dbReference type="Rhea" id="RHEA:42928"/>
        <dbReference type="Rhea" id="RHEA-COMP:10286"/>
        <dbReference type="Rhea" id="RHEA-COMP:10287"/>
        <dbReference type="ChEBI" id="CHEBI:15378"/>
        <dbReference type="ChEBI" id="CHEBI:57856"/>
        <dbReference type="ChEBI" id="CHEBI:59789"/>
        <dbReference type="ChEBI" id="CHEBI:74506"/>
        <dbReference type="ChEBI" id="CHEBI:82748"/>
        <dbReference type="EC" id="2.1.1.199"/>
    </reaction>
</comment>
<comment type="subcellular location">
    <subcellularLocation>
        <location evidence="1">Cytoplasm</location>
    </subcellularLocation>
</comment>
<comment type="similarity">
    <text evidence="1">Belongs to the methyltransferase superfamily. RsmH family.</text>
</comment>
<organism>
    <name type="scientific">Francisella philomiragia subsp. philomiragia (strain ATCC 25017 / CCUG 19701 / FSC 153 / O#319-036)</name>
    <dbReference type="NCBI Taxonomy" id="484022"/>
    <lineage>
        <taxon>Bacteria</taxon>
        <taxon>Pseudomonadati</taxon>
        <taxon>Pseudomonadota</taxon>
        <taxon>Gammaproteobacteria</taxon>
        <taxon>Thiotrichales</taxon>
        <taxon>Francisellaceae</taxon>
        <taxon>Francisella</taxon>
    </lineage>
</organism>
<keyword id="KW-0963">Cytoplasm</keyword>
<keyword id="KW-0489">Methyltransferase</keyword>
<keyword id="KW-0698">rRNA processing</keyword>
<keyword id="KW-0949">S-adenosyl-L-methionine</keyword>
<keyword id="KW-0808">Transferase</keyword>
<gene>
    <name evidence="1" type="primary">rsmH</name>
    <name type="synonym">mraW</name>
    <name type="ordered locus">Fphi_0236</name>
</gene>
<feature type="chain" id="PRO_1000148841" description="Ribosomal RNA small subunit methyltransferase H">
    <location>
        <begin position="1"/>
        <end position="308"/>
    </location>
</feature>
<feature type="binding site" evidence="1">
    <location>
        <begin position="33"/>
        <end position="35"/>
    </location>
    <ligand>
        <name>S-adenosyl-L-methionine</name>
        <dbReference type="ChEBI" id="CHEBI:59789"/>
    </ligand>
</feature>
<feature type="binding site" evidence="1">
    <location>
        <position position="52"/>
    </location>
    <ligand>
        <name>S-adenosyl-L-methionine</name>
        <dbReference type="ChEBI" id="CHEBI:59789"/>
    </ligand>
</feature>
<feature type="binding site" evidence="1">
    <location>
        <position position="81"/>
    </location>
    <ligand>
        <name>S-adenosyl-L-methionine</name>
        <dbReference type="ChEBI" id="CHEBI:59789"/>
    </ligand>
</feature>
<feature type="binding site" evidence="1">
    <location>
        <position position="99"/>
    </location>
    <ligand>
        <name>S-adenosyl-L-methionine</name>
        <dbReference type="ChEBI" id="CHEBI:59789"/>
    </ligand>
</feature>
<feature type="binding site" evidence="1">
    <location>
        <position position="106"/>
    </location>
    <ligand>
        <name>S-adenosyl-L-methionine</name>
        <dbReference type="ChEBI" id="CHEBI:59789"/>
    </ligand>
</feature>
<dbReference type="EC" id="2.1.1.199" evidence="1"/>
<dbReference type="EMBL" id="CP000937">
    <property type="protein sequence ID" value="ABZ86452.1"/>
    <property type="molecule type" value="Genomic_DNA"/>
</dbReference>
<dbReference type="SMR" id="B0TZ13"/>
<dbReference type="KEGG" id="fph:Fphi_0236"/>
<dbReference type="eggNOG" id="COG0275">
    <property type="taxonomic scope" value="Bacteria"/>
</dbReference>
<dbReference type="HOGENOM" id="CLU_038422_2_0_6"/>
<dbReference type="GO" id="GO:0005737">
    <property type="term" value="C:cytoplasm"/>
    <property type="evidence" value="ECO:0007669"/>
    <property type="project" value="UniProtKB-SubCell"/>
</dbReference>
<dbReference type="GO" id="GO:0071424">
    <property type="term" value="F:rRNA (cytosine-N4-)-methyltransferase activity"/>
    <property type="evidence" value="ECO:0007669"/>
    <property type="project" value="UniProtKB-UniRule"/>
</dbReference>
<dbReference type="GO" id="GO:0070475">
    <property type="term" value="P:rRNA base methylation"/>
    <property type="evidence" value="ECO:0007669"/>
    <property type="project" value="UniProtKB-UniRule"/>
</dbReference>
<dbReference type="Gene3D" id="1.10.150.170">
    <property type="entry name" value="Putative methyltransferase TM0872, insert domain"/>
    <property type="match status" value="1"/>
</dbReference>
<dbReference type="Gene3D" id="3.40.50.150">
    <property type="entry name" value="Vaccinia Virus protein VP39"/>
    <property type="match status" value="1"/>
</dbReference>
<dbReference type="HAMAP" id="MF_01007">
    <property type="entry name" value="16SrRNA_methyltr_H"/>
    <property type="match status" value="1"/>
</dbReference>
<dbReference type="InterPro" id="IPR002903">
    <property type="entry name" value="RsmH"/>
</dbReference>
<dbReference type="InterPro" id="IPR023397">
    <property type="entry name" value="SAM-dep_MeTrfase_MraW_recog"/>
</dbReference>
<dbReference type="InterPro" id="IPR029063">
    <property type="entry name" value="SAM-dependent_MTases_sf"/>
</dbReference>
<dbReference type="NCBIfam" id="TIGR00006">
    <property type="entry name" value="16S rRNA (cytosine(1402)-N(4))-methyltransferase RsmH"/>
    <property type="match status" value="1"/>
</dbReference>
<dbReference type="PANTHER" id="PTHR11265:SF0">
    <property type="entry name" value="12S RRNA N4-METHYLCYTIDINE METHYLTRANSFERASE"/>
    <property type="match status" value="1"/>
</dbReference>
<dbReference type="PANTHER" id="PTHR11265">
    <property type="entry name" value="S-ADENOSYL-METHYLTRANSFERASE MRAW"/>
    <property type="match status" value="1"/>
</dbReference>
<dbReference type="Pfam" id="PF01795">
    <property type="entry name" value="Methyltransf_5"/>
    <property type="match status" value="1"/>
</dbReference>
<dbReference type="PIRSF" id="PIRSF004486">
    <property type="entry name" value="MraW"/>
    <property type="match status" value="1"/>
</dbReference>
<dbReference type="SUPFAM" id="SSF81799">
    <property type="entry name" value="Putative methyltransferase TM0872, insert domain"/>
    <property type="match status" value="1"/>
</dbReference>
<dbReference type="SUPFAM" id="SSF53335">
    <property type="entry name" value="S-adenosyl-L-methionine-dependent methyltransferases"/>
    <property type="match status" value="1"/>
</dbReference>